<protein>
    <recommendedName>
        <fullName evidence="1">D-aminoacyl-tRNA deacylase</fullName>
        <shortName evidence="1">DTD</shortName>
        <ecNumber evidence="1">3.1.1.96</ecNumber>
    </recommendedName>
    <alternativeName>
        <fullName evidence="1">Gly-tRNA(Ala) deacylase</fullName>
    </alternativeName>
</protein>
<proteinExistence type="inferred from homology"/>
<keyword id="KW-0963">Cytoplasm</keyword>
<keyword id="KW-0378">Hydrolase</keyword>
<keyword id="KW-0694">RNA-binding</keyword>
<keyword id="KW-0820">tRNA-binding</keyword>
<accession>B2TN01</accession>
<reference key="1">
    <citation type="submission" date="2008-04" db="EMBL/GenBank/DDBJ databases">
        <title>Complete sequence of Clostridium botulinum strain Eklund.</title>
        <authorList>
            <person name="Brinkac L.M."/>
            <person name="Brown J.L."/>
            <person name="Bruce D."/>
            <person name="Detter C."/>
            <person name="Munk C."/>
            <person name="Smith L.A."/>
            <person name="Smith T.J."/>
            <person name="Sutton G."/>
            <person name="Brettin T.S."/>
        </authorList>
    </citation>
    <scope>NUCLEOTIDE SEQUENCE [LARGE SCALE GENOMIC DNA]</scope>
    <source>
        <strain>Eklund 17B / Type B</strain>
    </source>
</reference>
<evidence type="ECO:0000255" key="1">
    <source>
        <dbReference type="HAMAP-Rule" id="MF_00518"/>
    </source>
</evidence>
<dbReference type="EC" id="3.1.1.96" evidence="1"/>
<dbReference type="EMBL" id="CP001056">
    <property type="protein sequence ID" value="ACD22762.1"/>
    <property type="molecule type" value="Genomic_DNA"/>
</dbReference>
<dbReference type="SMR" id="B2TN01"/>
<dbReference type="KEGG" id="cbk:CLL_A1032"/>
<dbReference type="PATRIC" id="fig|935198.13.peg.981"/>
<dbReference type="HOGENOM" id="CLU_076901_1_0_9"/>
<dbReference type="Proteomes" id="UP000001195">
    <property type="component" value="Chromosome"/>
</dbReference>
<dbReference type="GO" id="GO:0005737">
    <property type="term" value="C:cytoplasm"/>
    <property type="evidence" value="ECO:0007669"/>
    <property type="project" value="UniProtKB-SubCell"/>
</dbReference>
<dbReference type="GO" id="GO:0051500">
    <property type="term" value="F:D-tyrosyl-tRNA(Tyr) deacylase activity"/>
    <property type="evidence" value="ECO:0007669"/>
    <property type="project" value="TreeGrafter"/>
</dbReference>
<dbReference type="GO" id="GO:0106026">
    <property type="term" value="F:Gly-tRNA(Ala) deacylase activity"/>
    <property type="evidence" value="ECO:0007669"/>
    <property type="project" value="UniProtKB-UniRule"/>
</dbReference>
<dbReference type="GO" id="GO:0043908">
    <property type="term" value="F:Ser(Gly)-tRNA(Ala) hydrolase activity"/>
    <property type="evidence" value="ECO:0007669"/>
    <property type="project" value="UniProtKB-UniRule"/>
</dbReference>
<dbReference type="GO" id="GO:0000049">
    <property type="term" value="F:tRNA binding"/>
    <property type="evidence" value="ECO:0007669"/>
    <property type="project" value="UniProtKB-UniRule"/>
</dbReference>
<dbReference type="GO" id="GO:0019478">
    <property type="term" value="P:D-amino acid catabolic process"/>
    <property type="evidence" value="ECO:0007669"/>
    <property type="project" value="UniProtKB-UniRule"/>
</dbReference>
<dbReference type="CDD" id="cd00563">
    <property type="entry name" value="Dtyr_deacylase"/>
    <property type="match status" value="1"/>
</dbReference>
<dbReference type="FunFam" id="3.50.80.10:FF:000001">
    <property type="entry name" value="D-aminoacyl-tRNA deacylase"/>
    <property type="match status" value="1"/>
</dbReference>
<dbReference type="Gene3D" id="3.50.80.10">
    <property type="entry name" value="D-tyrosyl-tRNA(Tyr) deacylase"/>
    <property type="match status" value="1"/>
</dbReference>
<dbReference type="HAMAP" id="MF_00518">
    <property type="entry name" value="Deacylase_Dtd"/>
    <property type="match status" value="1"/>
</dbReference>
<dbReference type="InterPro" id="IPR003732">
    <property type="entry name" value="Daa-tRNA_deacyls_DTD"/>
</dbReference>
<dbReference type="InterPro" id="IPR023509">
    <property type="entry name" value="DTD-like_sf"/>
</dbReference>
<dbReference type="NCBIfam" id="TIGR00256">
    <property type="entry name" value="D-aminoacyl-tRNA deacylase"/>
    <property type="match status" value="1"/>
</dbReference>
<dbReference type="PANTHER" id="PTHR10472:SF5">
    <property type="entry name" value="D-AMINOACYL-TRNA DEACYLASE 1"/>
    <property type="match status" value="1"/>
</dbReference>
<dbReference type="PANTHER" id="PTHR10472">
    <property type="entry name" value="D-TYROSYL-TRNA TYR DEACYLASE"/>
    <property type="match status" value="1"/>
</dbReference>
<dbReference type="Pfam" id="PF02580">
    <property type="entry name" value="Tyr_Deacylase"/>
    <property type="match status" value="1"/>
</dbReference>
<dbReference type="SUPFAM" id="SSF69500">
    <property type="entry name" value="DTD-like"/>
    <property type="match status" value="1"/>
</dbReference>
<feature type="chain" id="PRO_1000127508" description="D-aminoacyl-tRNA deacylase">
    <location>
        <begin position="1"/>
        <end position="149"/>
    </location>
</feature>
<feature type="short sequence motif" description="Gly-cisPro motif, important for rejection of L-amino acids" evidence="1">
    <location>
        <begin position="137"/>
        <end position="138"/>
    </location>
</feature>
<comment type="function">
    <text evidence="1">An aminoacyl-tRNA editing enzyme that deacylates mischarged D-aminoacyl-tRNAs. Also deacylates mischarged glycyl-tRNA(Ala), protecting cells against glycine mischarging by AlaRS. Acts via tRNA-based rather than protein-based catalysis; rejects L-amino acids rather than detecting D-amino acids in the active site. By recycling D-aminoacyl-tRNA to D-amino acids and free tRNA molecules, this enzyme counteracts the toxicity associated with the formation of D-aminoacyl-tRNA entities in vivo and helps enforce protein L-homochirality.</text>
</comment>
<comment type="catalytic activity">
    <reaction evidence="1">
        <text>glycyl-tRNA(Ala) + H2O = tRNA(Ala) + glycine + H(+)</text>
        <dbReference type="Rhea" id="RHEA:53744"/>
        <dbReference type="Rhea" id="RHEA-COMP:9657"/>
        <dbReference type="Rhea" id="RHEA-COMP:13640"/>
        <dbReference type="ChEBI" id="CHEBI:15377"/>
        <dbReference type="ChEBI" id="CHEBI:15378"/>
        <dbReference type="ChEBI" id="CHEBI:57305"/>
        <dbReference type="ChEBI" id="CHEBI:78442"/>
        <dbReference type="ChEBI" id="CHEBI:78522"/>
        <dbReference type="EC" id="3.1.1.96"/>
    </reaction>
</comment>
<comment type="catalytic activity">
    <reaction evidence="1">
        <text>a D-aminoacyl-tRNA + H2O = a tRNA + a D-alpha-amino acid + H(+)</text>
        <dbReference type="Rhea" id="RHEA:13953"/>
        <dbReference type="Rhea" id="RHEA-COMP:10123"/>
        <dbReference type="Rhea" id="RHEA-COMP:10124"/>
        <dbReference type="ChEBI" id="CHEBI:15377"/>
        <dbReference type="ChEBI" id="CHEBI:15378"/>
        <dbReference type="ChEBI" id="CHEBI:59871"/>
        <dbReference type="ChEBI" id="CHEBI:78442"/>
        <dbReference type="ChEBI" id="CHEBI:79333"/>
        <dbReference type="EC" id="3.1.1.96"/>
    </reaction>
</comment>
<comment type="subunit">
    <text evidence="1">Homodimer.</text>
</comment>
<comment type="subcellular location">
    <subcellularLocation>
        <location evidence="1">Cytoplasm</location>
    </subcellularLocation>
</comment>
<comment type="domain">
    <text evidence="1">A Gly-cisPro motif from one monomer fits into the active site of the other monomer to allow specific chiral rejection of L-amino acids.</text>
</comment>
<comment type="similarity">
    <text evidence="1">Belongs to the DTD family.</text>
</comment>
<organism>
    <name type="scientific">Clostridium botulinum (strain Eklund 17B / Type B)</name>
    <dbReference type="NCBI Taxonomy" id="935198"/>
    <lineage>
        <taxon>Bacteria</taxon>
        <taxon>Bacillati</taxon>
        <taxon>Bacillota</taxon>
        <taxon>Clostridia</taxon>
        <taxon>Eubacteriales</taxon>
        <taxon>Clostridiaceae</taxon>
        <taxon>Clostridium</taxon>
    </lineage>
</organism>
<gene>
    <name evidence="1" type="primary">dtd</name>
    <name type="ordered locus">CLL_A1032</name>
</gene>
<sequence length="149" mass="16588">MRAVVQRVTSSSVQVDGNIVGSIGRGLNVLIGISKSDTLQDLKYIRDKVINLRIFEDEKDKMNLSILDVKGELLVISQFTLYGDCRKGRRPNFMEAKGGEEAEGLYKEFLSLLKESNIKIETGEFGADMKVEINNDGPVTIILDSSKNF</sequence>
<name>DTD_CLOBB</name>